<evidence type="ECO:0000255" key="1">
    <source>
        <dbReference type="HAMAP-Rule" id="MF_01220"/>
    </source>
</evidence>
<organism>
    <name type="scientific">Pectobacterium atrosepticum (strain SCRI 1043 / ATCC BAA-672)</name>
    <name type="common">Erwinia carotovora subsp. atroseptica</name>
    <dbReference type="NCBI Taxonomy" id="218491"/>
    <lineage>
        <taxon>Bacteria</taxon>
        <taxon>Pseudomonadati</taxon>
        <taxon>Pseudomonadota</taxon>
        <taxon>Gammaproteobacteria</taxon>
        <taxon>Enterobacterales</taxon>
        <taxon>Pectobacteriaceae</taxon>
        <taxon>Pectobacterium</taxon>
    </lineage>
</organism>
<comment type="function">
    <text evidence="1">Catalyzes the reversible phosphorylation of UMP to UDP.</text>
</comment>
<comment type="catalytic activity">
    <reaction evidence="1">
        <text>UMP + ATP = UDP + ADP</text>
        <dbReference type="Rhea" id="RHEA:24400"/>
        <dbReference type="ChEBI" id="CHEBI:30616"/>
        <dbReference type="ChEBI" id="CHEBI:57865"/>
        <dbReference type="ChEBI" id="CHEBI:58223"/>
        <dbReference type="ChEBI" id="CHEBI:456216"/>
        <dbReference type="EC" id="2.7.4.22"/>
    </reaction>
</comment>
<comment type="activity regulation">
    <text evidence="1">Allosterically activated by GTP. Inhibited by UTP.</text>
</comment>
<comment type="pathway">
    <text evidence="1">Pyrimidine metabolism; CTP biosynthesis via de novo pathway; UDP from UMP (UMPK route): step 1/1.</text>
</comment>
<comment type="subunit">
    <text evidence="1">Homohexamer.</text>
</comment>
<comment type="subcellular location">
    <subcellularLocation>
        <location evidence="1">Cytoplasm</location>
    </subcellularLocation>
</comment>
<comment type="similarity">
    <text evidence="1">Belongs to the UMP kinase family.</text>
</comment>
<dbReference type="EC" id="2.7.4.22" evidence="1"/>
<dbReference type="EMBL" id="BX950851">
    <property type="protein sequence ID" value="CAG73944.1"/>
    <property type="molecule type" value="Genomic_DNA"/>
</dbReference>
<dbReference type="RefSeq" id="WP_005975910.1">
    <property type="nucleotide sequence ID" value="NC_004547.2"/>
</dbReference>
<dbReference type="SMR" id="Q6D8E1"/>
<dbReference type="STRING" id="218491.ECA1033"/>
<dbReference type="GeneID" id="93389133"/>
<dbReference type="KEGG" id="eca:ECA1033"/>
<dbReference type="eggNOG" id="COG0528">
    <property type="taxonomic scope" value="Bacteria"/>
</dbReference>
<dbReference type="HOGENOM" id="CLU_033861_0_0_6"/>
<dbReference type="OrthoDB" id="9807458at2"/>
<dbReference type="UniPathway" id="UPA00159">
    <property type="reaction ID" value="UER00275"/>
</dbReference>
<dbReference type="Proteomes" id="UP000007966">
    <property type="component" value="Chromosome"/>
</dbReference>
<dbReference type="GO" id="GO:0005829">
    <property type="term" value="C:cytosol"/>
    <property type="evidence" value="ECO:0007669"/>
    <property type="project" value="TreeGrafter"/>
</dbReference>
<dbReference type="GO" id="GO:0005524">
    <property type="term" value="F:ATP binding"/>
    <property type="evidence" value="ECO:0007669"/>
    <property type="project" value="UniProtKB-KW"/>
</dbReference>
<dbReference type="GO" id="GO:0033862">
    <property type="term" value="F:UMP kinase activity"/>
    <property type="evidence" value="ECO:0007669"/>
    <property type="project" value="UniProtKB-EC"/>
</dbReference>
<dbReference type="GO" id="GO:0044210">
    <property type="term" value="P:'de novo' CTP biosynthetic process"/>
    <property type="evidence" value="ECO:0007669"/>
    <property type="project" value="UniProtKB-UniRule"/>
</dbReference>
<dbReference type="GO" id="GO:0006225">
    <property type="term" value="P:UDP biosynthetic process"/>
    <property type="evidence" value="ECO:0007669"/>
    <property type="project" value="TreeGrafter"/>
</dbReference>
<dbReference type="CDD" id="cd04254">
    <property type="entry name" value="AAK_UMPK-PyrH-Ec"/>
    <property type="match status" value="1"/>
</dbReference>
<dbReference type="FunFam" id="3.40.1160.10:FF:000001">
    <property type="entry name" value="Uridylate kinase"/>
    <property type="match status" value="1"/>
</dbReference>
<dbReference type="Gene3D" id="3.40.1160.10">
    <property type="entry name" value="Acetylglutamate kinase-like"/>
    <property type="match status" value="1"/>
</dbReference>
<dbReference type="HAMAP" id="MF_01220_B">
    <property type="entry name" value="PyrH_B"/>
    <property type="match status" value="1"/>
</dbReference>
<dbReference type="InterPro" id="IPR036393">
    <property type="entry name" value="AceGlu_kinase-like_sf"/>
</dbReference>
<dbReference type="InterPro" id="IPR001048">
    <property type="entry name" value="Asp/Glu/Uridylate_kinase"/>
</dbReference>
<dbReference type="InterPro" id="IPR011817">
    <property type="entry name" value="Uridylate_kinase"/>
</dbReference>
<dbReference type="InterPro" id="IPR015963">
    <property type="entry name" value="Uridylate_kinase_bac"/>
</dbReference>
<dbReference type="NCBIfam" id="TIGR02075">
    <property type="entry name" value="pyrH_bact"/>
    <property type="match status" value="1"/>
</dbReference>
<dbReference type="PANTHER" id="PTHR42833">
    <property type="entry name" value="URIDYLATE KINASE"/>
    <property type="match status" value="1"/>
</dbReference>
<dbReference type="PANTHER" id="PTHR42833:SF4">
    <property type="entry name" value="URIDYLATE KINASE PUMPKIN, CHLOROPLASTIC"/>
    <property type="match status" value="1"/>
</dbReference>
<dbReference type="Pfam" id="PF00696">
    <property type="entry name" value="AA_kinase"/>
    <property type="match status" value="1"/>
</dbReference>
<dbReference type="PIRSF" id="PIRSF005650">
    <property type="entry name" value="Uridylate_kin"/>
    <property type="match status" value="1"/>
</dbReference>
<dbReference type="SUPFAM" id="SSF53633">
    <property type="entry name" value="Carbamate kinase-like"/>
    <property type="match status" value="1"/>
</dbReference>
<protein>
    <recommendedName>
        <fullName evidence="1">Uridylate kinase</fullName>
        <shortName evidence="1">UK</shortName>
        <ecNumber evidence="1">2.7.4.22</ecNumber>
    </recommendedName>
    <alternativeName>
        <fullName evidence="1">Uridine monophosphate kinase</fullName>
        <shortName evidence="1">UMP kinase</shortName>
        <shortName evidence="1">UMPK</shortName>
    </alternativeName>
</protein>
<name>PYRH_PECAS</name>
<reference key="1">
    <citation type="journal article" date="2004" name="Proc. Natl. Acad. Sci. U.S.A.">
        <title>Genome sequence of the enterobacterial phytopathogen Erwinia carotovora subsp. atroseptica and characterization of virulence factors.</title>
        <authorList>
            <person name="Bell K.S."/>
            <person name="Sebaihia M."/>
            <person name="Pritchard L."/>
            <person name="Holden M.T.G."/>
            <person name="Hyman L.J."/>
            <person name="Holeva M.C."/>
            <person name="Thomson N.R."/>
            <person name="Bentley S.D."/>
            <person name="Churcher L.J.C."/>
            <person name="Mungall K."/>
            <person name="Atkin R."/>
            <person name="Bason N."/>
            <person name="Brooks K."/>
            <person name="Chillingworth T."/>
            <person name="Clark K."/>
            <person name="Doggett J."/>
            <person name="Fraser A."/>
            <person name="Hance Z."/>
            <person name="Hauser H."/>
            <person name="Jagels K."/>
            <person name="Moule S."/>
            <person name="Norbertczak H."/>
            <person name="Ormond D."/>
            <person name="Price C."/>
            <person name="Quail M.A."/>
            <person name="Sanders M."/>
            <person name="Walker D."/>
            <person name="Whitehead S."/>
            <person name="Salmond G.P.C."/>
            <person name="Birch P.R.J."/>
            <person name="Parkhill J."/>
            <person name="Toth I.K."/>
        </authorList>
    </citation>
    <scope>NUCLEOTIDE SEQUENCE [LARGE SCALE GENOMIC DNA]</scope>
    <source>
        <strain>SCRI 1043 / ATCC BAA-672</strain>
    </source>
</reference>
<gene>
    <name evidence="1" type="primary">pyrH</name>
    <name type="ordered locus">ECA1033</name>
</gene>
<accession>Q6D8E1</accession>
<feature type="chain" id="PRO_1000053926" description="Uridylate kinase">
    <location>
        <begin position="1"/>
        <end position="241"/>
    </location>
</feature>
<feature type="region of interest" description="Involved in allosteric activation by GTP" evidence="1">
    <location>
        <begin position="23"/>
        <end position="28"/>
    </location>
</feature>
<feature type="binding site" evidence="1">
    <location>
        <begin position="15"/>
        <end position="18"/>
    </location>
    <ligand>
        <name>ATP</name>
        <dbReference type="ChEBI" id="CHEBI:30616"/>
    </ligand>
</feature>
<feature type="binding site" evidence="1">
    <location>
        <position position="57"/>
    </location>
    <ligand>
        <name>UMP</name>
        <dbReference type="ChEBI" id="CHEBI:57865"/>
    </ligand>
</feature>
<feature type="binding site" evidence="1">
    <location>
        <position position="58"/>
    </location>
    <ligand>
        <name>ATP</name>
        <dbReference type="ChEBI" id="CHEBI:30616"/>
    </ligand>
</feature>
<feature type="binding site" evidence="1">
    <location>
        <position position="62"/>
    </location>
    <ligand>
        <name>ATP</name>
        <dbReference type="ChEBI" id="CHEBI:30616"/>
    </ligand>
</feature>
<feature type="binding site" evidence="1">
    <location>
        <position position="77"/>
    </location>
    <ligand>
        <name>UMP</name>
        <dbReference type="ChEBI" id="CHEBI:57865"/>
    </ligand>
</feature>
<feature type="binding site" evidence="1">
    <location>
        <begin position="138"/>
        <end position="145"/>
    </location>
    <ligand>
        <name>UMP</name>
        <dbReference type="ChEBI" id="CHEBI:57865"/>
    </ligand>
</feature>
<feature type="binding site" evidence="1">
    <location>
        <position position="165"/>
    </location>
    <ligand>
        <name>ATP</name>
        <dbReference type="ChEBI" id="CHEBI:30616"/>
    </ligand>
</feature>
<feature type="binding site" evidence="1">
    <location>
        <position position="171"/>
    </location>
    <ligand>
        <name>ATP</name>
        <dbReference type="ChEBI" id="CHEBI:30616"/>
    </ligand>
</feature>
<feature type="binding site" evidence="1">
    <location>
        <position position="174"/>
    </location>
    <ligand>
        <name>ATP</name>
        <dbReference type="ChEBI" id="CHEBI:30616"/>
    </ligand>
</feature>
<keyword id="KW-0021">Allosteric enzyme</keyword>
<keyword id="KW-0067">ATP-binding</keyword>
<keyword id="KW-0963">Cytoplasm</keyword>
<keyword id="KW-0418">Kinase</keyword>
<keyword id="KW-0547">Nucleotide-binding</keyword>
<keyword id="KW-0665">Pyrimidine biosynthesis</keyword>
<keyword id="KW-1185">Reference proteome</keyword>
<keyword id="KW-0808">Transferase</keyword>
<sequence>MATNAKPVYQRILLKLSGEALQGTEGFGIDASILDRMAQEVKELVELGIQVGVVIGGGNLFRGAGLAKAGMNRVVGDHMGMLATVMNGLAMRDALHRAYVNARLMSAIPLNGVCDNYSWAEAISLLRNNRVVIFSAGTGNPFFTTDSAACLRGIEIEADVVLKATKVDGVYSADPVQDPSATMYETLTYQDVLERELKVMDLAAFTLARDHNLPIRVFNMNKPGALRRVVMGEKEGTLISQ</sequence>
<proteinExistence type="inferred from homology"/>